<proteinExistence type="inferred from homology"/>
<protein>
    <recommendedName>
        <fullName evidence="1">Malate dehydrogenase</fullName>
        <ecNumber evidence="1">1.1.1.37</ecNumber>
    </recommendedName>
</protein>
<evidence type="ECO:0000255" key="1">
    <source>
        <dbReference type="HAMAP-Rule" id="MF_01516"/>
    </source>
</evidence>
<organism>
    <name type="scientific">Salmonella paratyphi B (strain ATCC BAA-1250 / SPB7)</name>
    <dbReference type="NCBI Taxonomy" id="1016998"/>
    <lineage>
        <taxon>Bacteria</taxon>
        <taxon>Pseudomonadati</taxon>
        <taxon>Pseudomonadota</taxon>
        <taxon>Gammaproteobacteria</taxon>
        <taxon>Enterobacterales</taxon>
        <taxon>Enterobacteriaceae</taxon>
        <taxon>Salmonella</taxon>
    </lineage>
</organism>
<comment type="function">
    <text evidence="1">Catalyzes the reversible oxidation of malate to oxaloacetate.</text>
</comment>
<comment type="catalytic activity">
    <reaction evidence="1">
        <text>(S)-malate + NAD(+) = oxaloacetate + NADH + H(+)</text>
        <dbReference type="Rhea" id="RHEA:21432"/>
        <dbReference type="ChEBI" id="CHEBI:15378"/>
        <dbReference type="ChEBI" id="CHEBI:15589"/>
        <dbReference type="ChEBI" id="CHEBI:16452"/>
        <dbReference type="ChEBI" id="CHEBI:57540"/>
        <dbReference type="ChEBI" id="CHEBI:57945"/>
        <dbReference type="EC" id="1.1.1.37"/>
    </reaction>
</comment>
<comment type="subunit">
    <text evidence="1">Homodimer.</text>
</comment>
<comment type="similarity">
    <text evidence="1">Belongs to the LDH/MDH superfamily. MDH type 1 family.</text>
</comment>
<accession>A9N855</accession>
<name>MDH_SALPB</name>
<keyword id="KW-0520">NAD</keyword>
<keyword id="KW-0560">Oxidoreductase</keyword>
<keyword id="KW-0816">Tricarboxylic acid cycle</keyword>
<reference key="1">
    <citation type="submission" date="2007-11" db="EMBL/GenBank/DDBJ databases">
        <authorList>
            <consortium name="The Salmonella enterica serovar Paratyphi B Genome Sequencing Project"/>
            <person name="McClelland M."/>
            <person name="Sanderson E.K."/>
            <person name="Porwollik S."/>
            <person name="Spieth J."/>
            <person name="Clifton W.S."/>
            <person name="Fulton R."/>
            <person name="Cordes M."/>
            <person name="Wollam A."/>
            <person name="Shah N."/>
            <person name="Pepin K."/>
            <person name="Bhonagiri V."/>
            <person name="Nash W."/>
            <person name="Johnson M."/>
            <person name="Thiruvilangam P."/>
            <person name="Wilson R."/>
        </authorList>
    </citation>
    <scope>NUCLEOTIDE SEQUENCE [LARGE SCALE GENOMIC DNA]</scope>
    <source>
        <strain>ATCC BAA-1250 / SPB7</strain>
    </source>
</reference>
<gene>
    <name evidence="1" type="primary">mdh</name>
    <name type="ordered locus">SPAB_04185</name>
</gene>
<dbReference type="EC" id="1.1.1.37" evidence="1"/>
<dbReference type="EMBL" id="CP000886">
    <property type="protein sequence ID" value="ABX69508.1"/>
    <property type="molecule type" value="Genomic_DNA"/>
</dbReference>
<dbReference type="RefSeq" id="WP_000861586.1">
    <property type="nucleotide sequence ID" value="NC_010102.1"/>
</dbReference>
<dbReference type="SMR" id="A9N855"/>
<dbReference type="KEGG" id="spq:SPAB_04185"/>
<dbReference type="PATRIC" id="fig|1016998.12.peg.3940"/>
<dbReference type="HOGENOM" id="CLU_047181_1_0_6"/>
<dbReference type="BioCyc" id="SENT1016998:SPAB_RS17020-MONOMER"/>
<dbReference type="Proteomes" id="UP000008556">
    <property type="component" value="Chromosome"/>
</dbReference>
<dbReference type="GO" id="GO:0005737">
    <property type="term" value="C:cytoplasm"/>
    <property type="evidence" value="ECO:0007669"/>
    <property type="project" value="TreeGrafter"/>
</dbReference>
<dbReference type="GO" id="GO:0030060">
    <property type="term" value="F:L-malate dehydrogenase (NAD+) activity"/>
    <property type="evidence" value="ECO:0007669"/>
    <property type="project" value="UniProtKB-UniRule"/>
</dbReference>
<dbReference type="GO" id="GO:0006108">
    <property type="term" value="P:malate metabolic process"/>
    <property type="evidence" value="ECO:0007669"/>
    <property type="project" value="InterPro"/>
</dbReference>
<dbReference type="GO" id="GO:0006099">
    <property type="term" value="P:tricarboxylic acid cycle"/>
    <property type="evidence" value="ECO:0007669"/>
    <property type="project" value="UniProtKB-UniRule"/>
</dbReference>
<dbReference type="CDD" id="cd01337">
    <property type="entry name" value="MDH_glyoxysomal_mitochondrial"/>
    <property type="match status" value="1"/>
</dbReference>
<dbReference type="FunFam" id="3.40.50.720:FF:000017">
    <property type="entry name" value="Malate dehydrogenase"/>
    <property type="match status" value="1"/>
</dbReference>
<dbReference type="FunFam" id="3.90.110.10:FF:000001">
    <property type="entry name" value="Malate dehydrogenase"/>
    <property type="match status" value="1"/>
</dbReference>
<dbReference type="Gene3D" id="3.90.110.10">
    <property type="entry name" value="Lactate dehydrogenase/glycoside hydrolase, family 4, C-terminal"/>
    <property type="match status" value="1"/>
</dbReference>
<dbReference type="Gene3D" id="3.40.50.720">
    <property type="entry name" value="NAD(P)-binding Rossmann-like Domain"/>
    <property type="match status" value="1"/>
</dbReference>
<dbReference type="HAMAP" id="MF_01516">
    <property type="entry name" value="Malate_dehydrog_1"/>
    <property type="match status" value="1"/>
</dbReference>
<dbReference type="InterPro" id="IPR001557">
    <property type="entry name" value="L-lactate/malate_DH"/>
</dbReference>
<dbReference type="InterPro" id="IPR022383">
    <property type="entry name" value="Lactate/malate_DH_C"/>
</dbReference>
<dbReference type="InterPro" id="IPR001236">
    <property type="entry name" value="Lactate/malate_DH_N"/>
</dbReference>
<dbReference type="InterPro" id="IPR015955">
    <property type="entry name" value="Lactate_DH/Glyco_Ohase_4_C"/>
</dbReference>
<dbReference type="InterPro" id="IPR001252">
    <property type="entry name" value="Malate_DH_AS"/>
</dbReference>
<dbReference type="InterPro" id="IPR010097">
    <property type="entry name" value="Malate_DH_type1"/>
</dbReference>
<dbReference type="InterPro" id="IPR023958">
    <property type="entry name" value="Malate_DH_type1_bac"/>
</dbReference>
<dbReference type="InterPro" id="IPR036291">
    <property type="entry name" value="NAD(P)-bd_dom_sf"/>
</dbReference>
<dbReference type="NCBIfam" id="TIGR01772">
    <property type="entry name" value="MDH_euk_gproteo"/>
    <property type="match status" value="1"/>
</dbReference>
<dbReference type="PANTHER" id="PTHR11540">
    <property type="entry name" value="MALATE AND LACTATE DEHYDROGENASE"/>
    <property type="match status" value="1"/>
</dbReference>
<dbReference type="PANTHER" id="PTHR11540:SF16">
    <property type="entry name" value="MALATE DEHYDROGENASE, MITOCHONDRIAL"/>
    <property type="match status" value="1"/>
</dbReference>
<dbReference type="Pfam" id="PF02866">
    <property type="entry name" value="Ldh_1_C"/>
    <property type="match status" value="1"/>
</dbReference>
<dbReference type="Pfam" id="PF00056">
    <property type="entry name" value="Ldh_1_N"/>
    <property type="match status" value="1"/>
</dbReference>
<dbReference type="PIRSF" id="PIRSF000102">
    <property type="entry name" value="Lac_mal_DH"/>
    <property type="match status" value="1"/>
</dbReference>
<dbReference type="SUPFAM" id="SSF56327">
    <property type="entry name" value="LDH C-terminal domain-like"/>
    <property type="match status" value="1"/>
</dbReference>
<dbReference type="SUPFAM" id="SSF51735">
    <property type="entry name" value="NAD(P)-binding Rossmann-fold domains"/>
    <property type="match status" value="1"/>
</dbReference>
<dbReference type="PROSITE" id="PS00068">
    <property type="entry name" value="MDH"/>
    <property type="match status" value="1"/>
</dbReference>
<feature type="chain" id="PRO_1000087537" description="Malate dehydrogenase">
    <location>
        <begin position="1"/>
        <end position="312"/>
    </location>
</feature>
<feature type="active site" description="Proton acceptor" evidence="1">
    <location>
        <position position="177"/>
    </location>
</feature>
<feature type="binding site" evidence="1">
    <location>
        <begin position="7"/>
        <end position="13"/>
    </location>
    <ligand>
        <name>NAD(+)</name>
        <dbReference type="ChEBI" id="CHEBI:57540"/>
    </ligand>
</feature>
<feature type="binding site" evidence="1">
    <location>
        <position position="34"/>
    </location>
    <ligand>
        <name>NAD(+)</name>
        <dbReference type="ChEBI" id="CHEBI:57540"/>
    </ligand>
</feature>
<feature type="binding site" evidence="1">
    <location>
        <position position="81"/>
    </location>
    <ligand>
        <name>substrate</name>
    </ligand>
</feature>
<feature type="binding site" evidence="1">
    <location>
        <position position="87"/>
    </location>
    <ligand>
        <name>substrate</name>
    </ligand>
</feature>
<feature type="binding site" evidence="1">
    <location>
        <position position="94"/>
    </location>
    <ligand>
        <name>NAD(+)</name>
        <dbReference type="ChEBI" id="CHEBI:57540"/>
    </ligand>
</feature>
<feature type="binding site" evidence="1">
    <location>
        <begin position="117"/>
        <end position="119"/>
    </location>
    <ligand>
        <name>NAD(+)</name>
        <dbReference type="ChEBI" id="CHEBI:57540"/>
    </ligand>
</feature>
<feature type="binding site" evidence="1">
    <location>
        <position position="119"/>
    </location>
    <ligand>
        <name>substrate</name>
    </ligand>
</feature>
<feature type="binding site" evidence="1">
    <location>
        <position position="153"/>
    </location>
    <ligand>
        <name>substrate</name>
    </ligand>
</feature>
<feature type="binding site" evidence="1">
    <location>
        <position position="227"/>
    </location>
    <ligand>
        <name>NAD(+)</name>
        <dbReference type="ChEBI" id="CHEBI:57540"/>
    </ligand>
</feature>
<sequence length="312" mass="32476">MKVAVLGAAGGIGQALALLLKNQLPSGSELSLYDIAPVTPGVAVDLSHIPTAVKIKGFSGEDATPALEGADVVLISAGVARKPGMDRSDLFNVNAGIVKNLVQQIAKTCPKACVGIITNPVNTTVAIAAEVLKKAGVYDKNKLFGVTTLDIIRSNTFVAELKGKLPTEVEVPVIGGHSGVTILPLLSQIPGVSFTEQEAAELTKRIQNAGTEVVEAKAGGGSATLSMGQAAARFGLSLVRALQGEKGVVECAYVEGDGQYARFFSQPLLLGKNGVEERKSIGTLSAFEQHSLDAMLDTLKKDIQLGEDFINK</sequence>